<protein>
    <recommendedName>
        <fullName evidence="1">5-methyltetrahydropteroyltriglutamate--homocysteine methyltransferase</fullName>
        <ecNumber evidence="1">2.1.1.14</ecNumber>
    </recommendedName>
    <alternativeName>
        <fullName evidence="1">Cobalamin-independent methionine synthase</fullName>
    </alternativeName>
    <alternativeName>
        <fullName evidence="1">Methionine synthase, vitamin-B12 independent isozyme</fullName>
    </alternativeName>
</protein>
<evidence type="ECO:0000255" key="1">
    <source>
        <dbReference type="HAMAP-Rule" id="MF_00172"/>
    </source>
</evidence>
<organism>
    <name type="scientific">Paraburkholderia xenovorans (strain LB400)</name>
    <dbReference type="NCBI Taxonomy" id="266265"/>
    <lineage>
        <taxon>Bacteria</taxon>
        <taxon>Pseudomonadati</taxon>
        <taxon>Pseudomonadota</taxon>
        <taxon>Betaproteobacteria</taxon>
        <taxon>Burkholderiales</taxon>
        <taxon>Burkholderiaceae</taxon>
        <taxon>Paraburkholderia</taxon>
    </lineage>
</organism>
<gene>
    <name evidence="1" type="primary">metE</name>
    <name type="ordered locus">Bxeno_B1738</name>
    <name type="ORF">Bxe_B1250</name>
</gene>
<name>METE_PARXL</name>
<reference key="1">
    <citation type="journal article" date="2006" name="Proc. Natl. Acad. Sci. U.S.A.">
        <title>Burkholderia xenovorans LB400 harbors a multi-replicon, 9.73-Mbp genome shaped for versatility.</title>
        <authorList>
            <person name="Chain P.S.G."/>
            <person name="Denef V.J."/>
            <person name="Konstantinidis K.T."/>
            <person name="Vergez L.M."/>
            <person name="Agullo L."/>
            <person name="Reyes V.L."/>
            <person name="Hauser L."/>
            <person name="Cordova M."/>
            <person name="Gomez L."/>
            <person name="Gonzalez M."/>
            <person name="Land M."/>
            <person name="Lao V."/>
            <person name="Larimer F."/>
            <person name="LiPuma J.J."/>
            <person name="Mahenthiralingam E."/>
            <person name="Malfatti S.A."/>
            <person name="Marx C.J."/>
            <person name="Parnell J.J."/>
            <person name="Ramette A."/>
            <person name="Richardson P."/>
            <person name="Seeger M."/>
            <person name="Smith D."/>
            <person name="Spilker T."/>
            <person name="Sul W.J."/>
            <person name="Tsoi T.V."/>
            <person name="Ulrich L.E."/>
            <person name="Zhulin I.B."/>
            <person name="Tiedje J.M."/>
        </authorList>
    </citation>
    <scope>NUCLEOTIDE SEQUENCE [LARGE SCALE GENOMIC DNA]</scope>
    <source>
        <strain>LB400</strain>
    </source>
</reference>
<proteinExistence type="inferred from homology"/>
<sequence length="764" mass="84949">MARTHIPGFPRIGAQRELKFAQESFWRGESGEPHLRGVARELRARHWQLQQDAGLDFVTVGDFAYYDQMLNLSALLGALPQRFGFEPKTLSLAEYYELARGNAAQPAMEMTKWFDTNYHYLVPELGPQTSFDGGVEWLFEEIDEALALNLPVKPVLIGPITYLWLSKSHVAGFDRLSLLPKLVIRYARLLDKLRQSGIEWVQLDEPALCVDLPAEWLDAFSAAYEVLGTSGVKVLLATYFESAAEHAPRVAALPVAGVHLDLVRAPQQLDAWRAALPAHAVLSAGVIDGRNIWRADLGEIVESLQSLQAEFGERLWIAPSCSLLHVPVSLDAEKKLDADLKSWLAFATEKLAEVATLALALRDPAAAEPALAATDRALEARRRSSAVVNALVQKRVAAVSSAMAERQSPFAERNRLQREALGLPLLPTTTIGSFPQTAAIRQARAAYKRGELRALDYLQRMRTEIEIAVRKQEELGLDVLVHGEAERNDMVEYFGEQLWGYAFTENGWVQSYGSRCVKPPIIYGDVYRPEPMTVETTRYAQSLTQRLMKGMLTGPVTMLQWSFVRDDQPRSTTALQLALAIRDEVVDLEKAGIRIIQIDEPAFREGLPLRRADWAAYLEWATRAFRISAAGVADQTQIHTHMCYSEFNDILPSIAAMDADVITIETSRSAMELLDGFGAFAYPNEIGPGVYDIHSPRVPGADAMQRLLERACEVIPAERLWVNPDCGLKTRGWPETEAALANMVRAAKALRAKLAARQADELTA</sequence>
<accession>Q13MI3</accession>
<feature type="chain" id="PRO_1000071609" description="5-methyltetrahydropteroyltriglutamate--homocysteine methyltransferase">
    <location>
        <begin position="1"/>
        <end position="764"/>
    </location>
</feature>
<feature type="active site" description="Proton donor" evidence="1">
    <location>
        <position position="694"/>
    </location>
</feature>
<feature type="binding site" evidence="1">
    <location>
        <begin position="16"/>
        <end position="19"/>
    </location>
    <ligand>
        <name>5-methyltetrahydropteroyltri-L-glutamate</name>
        <dbReference type="ChEBI" id="CHEBI:58207"/>
    </ligand>
</feature>
<feature type="binding site" evidence="1">
    <location>
        <position position="112"/>
    </location>
    <ligand>
        <name>5-methyltetrahydropteroyltri-L-glutamate</name>
        <dbReference type="ChEBI" id="CHEBI:58207"/>
    </ligand>
</feature>
<feature type="binding site" evidence="1">
    <location>
        <begin position="431"/>
        <end position="433"/>
    </location>
    <ligand>
        <name>L-homocysteine</name>
        <dbReference type="ChEBI" id="CHEBI:58199"/>
    </ligand>
</feature>
<feature type="binding site" evidence="1">
    <location>
        <begin position="431"/>
        <end position="433"/>
    </location>
    <ligand>
        <name>L-methionine</name>
        <dbReference type="ChEBI" id="CHEBI:57844"/>
    </ligand>
</feature>
<feature type="binding site" evidence="1">
    <location>
        <position position="484"/>
    </location>
    <ligand>
        <name>L-homocysteine</name>
        <dbReference type="ChEBI" id="CHEBI:58199"/>
    </ligand>
</feature>
<feature type="binding site" evidence="1">
    <location>
        <position position="484"/>
    </location>
    <ligand>
        <name>L-methionine</name>
        <dbReference type="ChEBI" id="CHEBI:57844"/>
    </ligand>
</feature>
<feature type="binding site" evidence="1">
    <location>
        <begin position="515"/>
        <end position="516"/>
    </location>
    <ligand>
        <name>5-methyltetrahydropteroyltri-L-glutamate</name>
        <dbReference type="ChEBI" id="CHEBI:58207"/>
    </ligand>
</feature>
<feature type="binding site" evidence="1">
    <location>
        <position position="561"/>
    </location>
    <ligand>
        <name>5-methyltetrahydropteroyltri-L-glutamate</name>
        <dbReference type="ChEBI" id="CHEBI:58207"/>
    </ligand>
</feature>
<feature type="binding site" evidence="1">
    <location>
        <position position="599"/>
    </location>
    <ligand>
        <name>L-homocysteine</name>
        <dbReference type="ChEBI" id="CHEBI:58199"/>
    </ligand>
</feature>
<feature type="binding site" evidence="1">
    <location>
        <position position="599"/>
    </location>
    <ligand>
        <name>L-methionine</name>
        <dbReference type="ChEBI" id="CHEBI:57844"/>
    </ligand>
</feature>
<feature type="binding site" evidence="1">
    <location>
        <position position="605"/>
    </location>
    <ligand>
        <name>5-methyltetrahydropteroyltri-L-glutamate</name>
        <dbReference type="ChEBI" id="CHEBI:58207"/>
    </ligand>
</feature>
<feature type="binding site" evidence="1">
    <location>
        <position position="641"/>
    </location>
    <ligand>
        <name>Zn(2+)</name>
        <dbReference type="ChEBI" id="CHEBI:29105"/>
        <note>catalytic</note>
    </ligand>
</feature>
<feature type="binding site" evidence="1">
    <location>
        <position position="643"/>
    </location>
    <ligand>
        <name>Zn(2+)</name>
        <dbReference type="ChEBI" id="CHEBI:29105"/>
        <note>catalytic</note>
    </ligand>
</feature>
<feature type="binding site" evidence="1">
    <location>
        <position position="665"/>
    </location>
    <ligand>
        <name>Zn(2+)</name>
        <dbReference type="ChEBI" id="CHEBI:29105"/>
        <note>catalytic</note>
    </ligand>
</feature>
<feature type="binding site" evidence="1">
    <location>
        <position position="726"/>
    </location>
    <ligand>
        <name>Zn(2+)</name>
        <dbReference type="ChEBI" id="CHEBI:29105"/>
        <note>catalytic</note>
    </ligand>
</feature>
<dbReference type="EC" id="2.1.1.14" evidence="1"/>
<dbReference type="EMBL" id="CP000271">
    <property type="protein sequence ID" value="ABE34706.1"/>
    <property type="molecule type" value="Genomic_DNA"/>
</dbReference>
<dbReference type="RefSeq" id="WP_011492026.1">
    <property type="nucleotide sequence ID" value="NC_007952.1"/>
</dbReference>
<dbReference type="SMR" id="Q13MI3"/>
<dbReference type="STRING" id="266265.Bxe_B1250"/>
<dbReference type="KEGG" id="bxb:DR64_6565"/>
<dbReference type="KEGG" id="bxe:Bxe_B1250"/>
<dbReference type="PATRIC" id="fig|266265.5.peg.6505"/>
<dbReference type="eggNOG" id="COG0620">
    <property type="taxonomic scope" value="Bacteria"/>
</dbReference>
<dbReference type="OrthoDB" id="244285at2"/>
<dbReference type="UniPathway" id="UPA00051">
    <property type="reaction ID" value="UER00082"/>
</dbReference>
<dbReference type="Proteomes" id="UP000001817">
    <property type="component" value="Chromosome 2"/>
</dbReference>
<dbReference type="GO" id="GO:0003871">
    <property type="term" value="F:5-methyltetrahydropteroyltriglutamate-homocysteine S-methyltransferase activity"/>
    <property type="evidence" value="ECO:0007669"/>
    <property type="project" value="UniProtKB-UniRule"/>
</dbReference>
<dbReference type="GO" id="GO:0008270">
    <property type="term" value="F:zinc ion binding"/>
    <property type="evidence" value="ECO:0007669"/>
    <property type="project" value="InterPro"/>
</dbReference>
<dbReference type="GO" id="GO:0009086">
    <property type="term" value="P:methionine biosynthetic process"/>
    <property type="evidence" value="ECO:0007669"/>
    <property type="project" value="UniProtKB-UniRule"/>
</dbReference>
<dbReference type="GO" id="GO:0032259">
    <property type="term" value="P:methylation"/>
    <property type="evidence" value="ECO:0007669"/>
    <property type="project" value="UniProtKB-KW"/>
</dbReference>
<dbReference type="CDD" id="cd03311">
    <property type="entry name" value="CIMS_C_terminal_like"/>
    <property type="match status" value="1"/>
</dbReference>
<dbReference type="CDD" id="cd03312">
    <property type="entry name" value="CIMS_N_terminal_like"/>
    <property type="match status" value="1"/>
</dbReference>
<dbReference type="FunFam" id="3.20.20.210:FF:000002">
    <property type="entry name" value="5-methyltetrahydropteroyltriglutamate--homocysteine methyltransferase"/>
    <property type="match status" value="1"/>
</dbReference>
<dbReference type="Gene3D" id="3.20.20.210">
    <property type="match status" value="2"/>
</dbReference>
<dbReference type="HAMAP" id="MF_00172">
    <property type="entry name" value="Meth_synth"/>
    <property type="match status" value="1"/>
</dbReference>
<dbReference type="InterPro" id="IPR013215">
    <property type="entry name" value="Cbl-indep_Met_Synth_N"/>
</dbReference>
<dbReference type="InterPro" id="IPR006276">
    <property type="entry name" value="Cobalamin-indep_Met_synthase"/>
</dbReference>
<dbReference type="InterPro" id="IPR002629">
    <property type="entry name" value="Met_Synth_C/arc"/>
</dbReference>
<dbReference type="InterPro" id="IPR038071">
    <property type="entry name" value="UROD/MetE-like_sf"/>
</dbReference>
<dbReference type="NCBIfam" id="TIGR01371">
    <property type="entry name" value="met_syn_B12ind"/>
    <property type="match status" value="1"/>
</dbReference>
<dbReference type="NCBIfam" id="NF003556">
    <property type="entry name" value="PRK05222.1"/>
    <property type="match status" value="1"/>
</dbReference>
<dbReference type="PANTHER" id="PTHR30519">
    <property type="entry name" value="5-METHYLTETRAHYDROPTEROYLTRIGLUTAMATE--HOMOCYSTEINE METHYLTRANSFERASE"/>
    <property type="match status" value="1"/>
</dbReference>
<dbReference type="Pfam" id="PF08267">
    <property type="entry name" value="Meth_synt_1"/>
    <property type="match status" value="1"/>
</dbReference>
<dbReference type="Pfam" id="PF01717">
    <property type="entry name" value="Meth_synt_2"/>
    <property type="match status" value="1"/>
</dbReference>
<dbReference type="PIRSF" id="PIRSF000382">
    <property type="entry name" value="MeTrfase_B12_ind"/>
    <property type="match status" value="1"/>
</dbReference>
<dbReference type="SUPFAM" id="SSF51726">
    <property type="entry name" value="UROD/MetE-like"/>
    <property type="match status" value="2"/>
</dbReference>
<comment type="function">
    <text evidence="1">Catalyzes the transfer of a methyl group from 5-methyltetrahydrofolate to homocysteine resulting in methionine formation.</text>
</comment>
<comment type="catalytic activity">
    <reaction evidence="1">
        <text>5-methyltetrahydropteroyltri-L-glutamate + L-homocysteine = tetrahydropteroyltri-L-glutamate + L-methionine</text>
        <dbReference type="Rhea" id="RHEA:21196"/>
        <dbReference type="ChEBI" id="CHEBI:57844"/>
        <dbReference type="ChEBI" id="CHEBI:58140"/>
        <dbReference type="ChEBI" id="CHEBI:58199"/>
        <dbReference type="ChEBI" id="CHEBI:58207"/>
        <dbReference type="EC" id="2.1.1.14"/>
    </reaction>
</comment>
<comment type="cofactor">
    <cofactor evidence="1">
        <name>Zn(2+)</name>
        <dbReference type="ChEBI" id="CHEBI:29105"/>
    </cofactor>
    <text evidence="1">Binds 1 zinc ion per subunit.</text>
</comment>
<comment type="pathway">
    <text evidence="1">Amino-acid biosynthesis; L-methionine biosynthesis via de novo pathway; L-methionine from L-homocysteine (MetE route): step 1/1.</text>
</comment>
<comment type="similarity">
    <text evidence="1">Belongs to the vitamin-B12 independent methionine synthase family.</text>
</comment>
<keyword id="KW-0028">Amino-acid biosynthesis</keyword>
<keyword id="KW-0479">Metal-binding</keyword>
<keyword id="KW-0486">Methionine biosynthesis</keyword>
<keyword id="KW-0489">Methyltransferase</keyword>
<keyword id="KW-1185">Reference proteome</keyword>
<keyword id="KW-0677">Repeat</keyword>
<keyword id="KW-0808">Transferase</keyword>
<keyword id="KW-0862">Zinc</keyword>